<sequence>MTLLTRIKTETILLESDIKELIDILISPSIGTDIKYELLSSYSEREIQQQELTYIVRSLINTMYPHQPCYEGAMCVCGTGGDKSNSFNISTTVAFVVASAGVKVIKHGNKSITSNSGSTDLLNQMNIQTTTVDDTPNQLNEKDLVFIGATESYPIMKYMQPVRKMIGKPTILNLVGPLINPYHLTYQMVGVFDPTKLKLVAKTIKDLGRKRAIVLHGANGMDEATLSGDNLIYELTEDGEIKNYTLNATDYGLKHAPNSDFKGGSPEENLAISLNILNGKDQSSRRDVVLLNAGLSLYVAEKVDTIAEGIELATTLIDNGEALKKYHQMRGE</sequence>
<keyword id="KW-0028">Amino-acid biosynthesis</keyword>
<keyword id="KW-0057">Aromatic amino acid biosynthesis</keyword>
<keyword id="KW-0328">Glycosyltransferase</keyword>
<keyword id="KW-0460">Magnesium</keyword>
<keyword id="KW-0479">Metal-binding</keyword>
<keyword id="KW-0808">Transferase</keyword>
<keyword id="KW-0822">Tryptophan biosynthesis</keyword>
<accession>A7X232</accession>
<organism>
    <name type="scientific">Staphylococcus aureus (strain Mu3 / ATCC 700698)</name>
    <dbReference type="NCBI Taxonomy" id="418127"/>
    <lineage>
        <taxon>Bacteria</taxon>
        <taxon>Bacillati</taxon>
        <taxon>Bacillota</taxon>
        <taxon>Bacilli</taxon>
        <taxon>Bacillales</taxon>
        <taxon>Staphylococcaceae</taxon>
        <taxon>Staphylococcus</taxon>
    </lineage>
</organism>
<proteinExistence type="inferred from homology"/>
<protein>
    <recommendedName>
        <fullName evidence="1">Anthranilate phosphoribosyltransferase</fullName>
        <ecNumber evidence="1">2.4.2.18</ecNumber>
    </recommendedName>
</protein>
<gene>
    <name evidence="1" type="primary">trpD</name>
    <name type="ordered locus">SAHV_1357</name>
</gene>
<reference key="1">
    <citation type="journal article" date="2008" name="Antimicrob. Agents Chemother.">
        <title>Mutated response regulator graR is responsible for phenotypic conversion of Staphylococcus aureus from heterogeneous vancomycin-intermediate resistance to vancomycin-intermediate resistance.</title>
        <authorList>
            <person name="Neoh H.-M."/>
            <person name="Cui L."/>
            <person name="Yuzawa H."/>
            <person name="Takeuchi F."/>
            <person name="Matsuo M."/>
            <person name="Hiramatsu K."/>
        </authorList>
    </citation>
    <scope>NUCLEOTIDE SEQUENCE [LARGE SCALE GENOMIC DNA]</scope>
    <source>
        <strain>Mu3 / ATCC 700698</strain>
    </source>
</reference>
<dbReference type="EC" id="2.4.2.18" evidence="1"/>
<dbReference type="EMBL" id="AP009324">
    <property type="protein sequence ID" value="BAF78240.1"/>
    <property type="molecule type" value="Genomic_DNA"/>
</dbReference>
<dbReference type="RefSeq" id="WP_000173833.1">
    <property type="nucleotide sequence ID" value="NC_009782.1"/>
</dbReference>
<dbReference type="SMR" id="A7X232"/>
<dbReference type="KEGG" id="saw:SAHV_1357"/>
<dbReference type="HOGENOM" id="CLU_034315_3_0_9"/>
<dbReference type="UniPathway" id="UPA00035">
    <property type="reaction ID" value="UER00041"/>
</dbReference>
<dbReference type="GO" id="GO:0005829">
    <property type="term" value="C:cytosol"/>
    <property type="evidence" value="ECO:0007669"/>
    <property type="project" value="TreeGrafter"/>
</dbReference>
<dbReference type="GO" id="GO:0004048">
    <property type="term" value="F:anthranilate phosphoribosyltransferase activity"/>
    <property type="evidence" value="ECO:0007669"/>
    <property type="project" value="UniProtKB-UniRule"/>
</dbReference>
<dbReference type="GO" id="GO:0000287">
    <property type="term" value="F:magnesium ion binding"/>
    <property type="evidence" value="ECO:0007669"/>
    <property type="project" value="UniProtKB-UniRule"/>
</dbReference>
<dbReference type="GO" id="GO:0000162">
    <property type="term" value="P:L-tryptophan biosynthetic process"/>
    <property type="evidence" value="ECO:0007669"/>
    <property type="project" value="UniProtKB-UniRule"/>
</dbReference>
<dbReference type="FunFam" id="3.40.1030.10:FF:000009">
    <property type="entry name" value="Anthranilate phosphoribosyltransferase"/>
    <property type="match status" value="1"/>
</dbReference>
<dbReference type="Gene3D" id="3.40.1030.10">
    <property type="entry name" value="Nucleoside phosphorylase/phosphoribosyltransferase catalytic domain"/>
    <property type="match status" value="1"/>
</dbReference>
<dbReference type="HAMAP" id="MF_00211">
    <property type="entry name" value="TrpD"/>
    <property type="match status" value="1"/>
</dbReference>
<dbReference type="InterPro" id="IPR005940">
    <property type="entry name" value="Anthranilate_Pribosyl_Tfrase"/>
</dbReference>
<dbReference type="InterPro" id="IPR000312">
    <property type="entry name" value="Glycosyl_Trfase_fam3"/>
</dbReference>
<dbReference type="InterPro" id="IPR035902">
    <property type="entry name" value="Nuc_phospho_transferase"/>
</dbReference>
<dbReference type="NCBIfam" id="TIGR01245">
    <property type="entry name" value="trpD"/>
    <property type="match status" value="1"/>
</dbReference>
<dbReference type="PANTHER" id="PTHR43285">
    <property type="entry name" value="ANTHRANILATE PHOSPHORIBOSYLTRANSFERASE"/>
    <property type="match status" value="1"/>
</dbReference>
<dbReference type="PANTHER" id="PTHR43285:SF2">
    <property type="entry name" value="ANTHRANILATE PHOSPHORIBOSYLTRANSFERASE"/>
    <property type="match status" value="1"/>
</dbReference>
<dbReference type="Pfam" id="PF00591">
    <property type="entry name" value="Glycos_transf_3"/>
    <property type="match status" value="1"/>
</dbReference>
<dbReference type="SUPFAM" id="SSF52418">
    <property type="entry name" value="Nucleoside phosphorylase/phosphoribosyltransferase catalytic domain"/>
    <property type="match status" value="1"/>
</dbReference>
<name>TRPD_STAA1</name>
<feature type="chain" id="PRO_1000099840" description="Anthranilate phosphoribosyltransferase">
    <location>
        <begin position="1"/>
        <end position="332"/>
    </location>
</feature>
<feature type="binding site" evidence="1">
    <location>
        <position position="78"/>
    </location>
    <ligand>
        <name>5-phospho-alpha-D-ribose 1-diphosphate</name>
        <dbReference type="ChEBI" id="CHEBI:58017"/>
    </ligand>
</feature>
<feature type="binding site" evidence="1">
    <location>
        <position position="78"/>
    </location>
    <ligand>
        <name>anthranilate</name>
        <dbReference type="ChEBI" id="CHEBI:16567"/>
        <label>1</label>
    </ligand>
</feature>
<feature type="binding site" evidence="1">
    <location>
        <begin position="81"/>
        <end position="82"/>
    </location>
    <ligand>
        <name>5-phospho-alpha-D-ribose 1-diphosphate</name>
        <dbReference type="ChEBI" id="CHEBI:58017"/>
    </ligand>
</feature>
<feature type="binding site" evidence="1">
    <location>
        <position position="86"/>
    </location>
    <ligand>
        <name>5-phospho-alpha-D-ribose 1-diphosphate</name>
        <dbReference type="ChEBI" id="CHEBI:58017"/>
    </ligand>
</feature>
<feature type="binding site" evidence="1">
    <location>
        <begin position="88"/>
        <end position="91"/>
    </location>
    <ligand>
        <name>5-phospho-alpha-D-ribose 1-diphosphate</name>
        <dbReference type="ChEBI" id="CHEBI:58017"/>
    </ligand>
</feature>
<feature type="binding site" evidence="1">
    <location>
        <position position="90"/>
    </location>
    <ligand>
        <name>Mg(2+)</name>
        <dbReference type="ChEBI" id="CHEBI:18420"/>
        <label>1</label>
    </ligand>
</feature>
<feature type="binding site" evidence="1">
    <location>
        <begin position="106"/>
        <end position="114"/>
    </location>
    <ligand>
        <name>5-phospho-alpha-D-ribose 1-diphosphate</name>
        <dbReference type="ChEBI" id="CHEBI:58017"/>
    </ligand>
</feature>
<feature type="binding site" evidence="1">
    <location>
        <position position="109"/>
    </location>
    <ligand>
        <name>anthranilate</name>
        <dbReference type="ChEBI" id="CHEBI:16567"/>
        <label>1</label>
    </ligand>
</feature>
<feature type="binding site" evidence="1">
    <location>
        <position position="118"/>
    </location>
    <ligand>
        <name>5-phospho-alpha-D-ribose 1-diphosphate</name>
        <dbReference type="ChEBI" id="CHEBI:58017"/>
    </ligand>
</feature>
<feature type="binding site" evidence="1">
    <location>
        <position position="163"/>
    </location>
    <ligand>
        <name>anthranilate</name>
        <dbReference type="ChEBI" id="CHEBI:16567"/>
        <label>2</label>
    </ligand>
</feature>
<feature type="binding site" evidence="1">
    <location>
        <position position="222"/>
    </location>
    <ligand>
        <name>Mg(2+)</name>
        <dbReference type="ChEBI" id="CHEBI:18420"/>
        <label>2</label>
    </ligand>
</feature>
<feature type="binding site" evidence="1">
    <location>
        <position position="223"/>
    </location>
    <ligand>
        <name>Mg(2+)</name>
        <dbReference type="ChEBI" id="CHEBI:18420"/>
        <label>1</label>
    </ligand>
</feature>
<feature type="binding site" evidence="1">
    <location>
        <position position="223"/>
    </location>
    <ligand>
        <name>Mg(2+)</name>
        <dbReference type="ChEBI" id="CHEBI:18420"/>
        <label>2</label>
    </ligand>
</feature>
<evidence type="ECO:0000255" key="1">
    <source>
        <dbReference type="HAMAP-Rule" id="MF_00211"/>
    </source>
</evidence>
<comment type="function">
    <text evidence="1">Catalyzes the transfer of the phosphoribosyl group of 5-phosphorylribose-1-pyrophosphate (PRPP) to anthranilate to yield N-(5'-phosphoribosyl)-anthranilate (PRA).</text>
</comment>
<comment type="catalytic activity">
    <reaction evidence="1">
        <text>N-(5-phospho-beta-D-ribosyl)anthranilate + diphosphate = 5-phospho-alpha-D-ribose 1-diphosphate + anthranilate</text>
        <dbReference type="Rhea" id="RHEA:11768"/>
        <dbReference type="ChEBI" id="CHEBI:16567"/>
        <dbReference type="ChEBI" id="CHEBI:18277"/>
        <dbReference type="ChEBI" id="CHEBI:33019"/>
        <dbReference type="ChEBI" id="CHEBI:58017"/>
        <dbReference type="EC" id="2.4.2.18"/>
    </reaction>
</comment>
<comment type="cofactor">
    <cofactor evidence="1">
        <name>Mg(2+)</name>
        <dbReference type="ChEBI" id="CHEBI:18420"/>
    </cofactor>
    <text evidence="1">Binds 2 magnesium ions per monomer.</text>
</comment>
<comment type="pathway">
    <text evidence="1">Amino-acid biosynthesis; L-tryptophan biosynthesis; L-tryptophan from chorismate: step 2/5.</text>
</comment>
<comment type="subunit">
    <text evidence="1">Homodimer.</text>
</comment>
<comment type="similarity">
    <text evidence="1">Belongs to the anthranilate phosphoribosyltransferase family.</text>
</comment>